<dbReference type="EC" id="6.1.1.6" evidence="1"/>
<dbReference type="EMBL" id="AE016795">
    <property type="protein sequence ID" value="AAO09044.1"/>
    <property type="molecule type" value="Genomic_DNA"/>
</dbReference>
<dbReference type="RefSeq" id="WP_011078614.1">
    <property type="nucleotide sequence ID" value="NC_004459.3"/>
</dbReference>
<dbReference type="SMR" id="Q8DEQ9"/>
<dbReference type="KEGG" id="vvu:VV1_0526"/>
<dbReference type="HOGENOM" id="CLU_008255_6_0_6"/>
<dbReference type="Proteomes" id="UP000002275">
    <property type="component" value="Chromosome 1"/>
</dbReference>
<dbReference type="GO" id="GO:0005829">
    <property type="term" value="C:cytosol"/>
    <property type="evidence" value="ECO:0007669"/>
    <property type="project" value="TreeGrafter"/>
</dbReference>
<dbReference type="GO" id="GO:0005524">
    <property type="term" value="F:ATP binding"/>
    <property type="evidence" value="ECO:0007669"/>
    <property type="project" value="UniProtKB-UniRule"/>
</dbReference>
<dbReference type="GO" id="GO:0004824">
    <property type="term" value="F:lysine-tRNA ligase activity"/>
    <property type="evidence" value="ECO:0007669"/>
    <property type="project" value="UniProtKB-UniRule"/>
</dbReference>
<dbReference type="GO" id="GO:0000287">
    <property type="term" value="F:magnesium ion binding"/>
    <property type="evidence" value="ECO:0007669"/>
    <property type="project" value="UniProtKB-UniRule"/>
</dbReference>
<dbReference type="GO" id="GO:0000049">
    <property type="term" value="F:tRNA binding"/>
    <property type="evidence" value="ECO:0007669"/>
    <property type="project" value="TreeGrafter"/>
</dbReference>
<dbReference type="GO" id="GO:0006430">
    <property type="term" value="P:lysyl-tRNA aminoacylation"/>
    <property type="evidence" value="ECO:0007669"/>
    <property type="project" value="UniProtKB-UniRule"/>
</dbReference>
<dbReference type="CDD" id="cd00775">
    <property type="entry name" value="LysRS_core"/>
    <property type="match status" value="1"/>
</dbReference>
<dbReference type="CDD" id="cd04322">
    <property type="entry name" value="LysRS_N"/>
    <property type="match status" value="1"/>
</dbReference>
<dbReference type="FunFam" id="2.40.50.140:FF:000024">
    <property type="entry name" value="Lysine--tRNA ligase"/>
    <property type="match status" value="1"/>
</dbReference>
<dbReference type="FunFam" id="3.30.930.10:FF:000001">
    <property type="entry name" value="Lysine--tRNA ligase"/>
    <property type="match status" value="1"/>
</dbReference>
<dbReference type="Gene3D" id="3.30.930.10">
    <property type="entry name" value="Bira Bifunctional Protein, Domain 2"/>
    <property type="match status" value="1"/>
</dbReference>
<dbReference type="Gene3D" id="2.40.50.140">
    <property type="entry name" value="Nucleic acid-binding proteins"/>
    <property type="match status" value="1"/>
</dbReference>
<dbReference type="HAMAP" id="MF_00252">
    <property type="entry name" value="Lys_tRNA_synth_class2"/>
    <property type="match status" value="1"/>
</dbReference>
<dbReference type="InterPro" id="IPR004364">
    <property type="entry name" value="Aa-tRNA-synt_II"/>
</dbReference>
<dbReference type="InterPro" id="IPR006195">
    <property type="entry name" value="aa-tRNA-synth_II"/>
</dbReference>
<dbReference type="InterPro" id="IPR045864">
    <property type="entry name" value="aa-tRNA-synth_II/BPL/LPL"/>
</dbReference>
<dbReference type="InterPro" id="IPR002313">
    <property type="entry name" value="Lys-tRNA-ligase_II"/>
</dbReference>
<dbReference type="InterPro" id="IPR044136">
    <property type="entry name" value="Lys-tRNA-ligase_II_N"/>
</dbReference>
<dbReference type="InterPro" id="IPR018149">
    <property type="entry name" value="Lys-tRNA-synth_II_C"/>
</dbReference>
<dbReference type="InterPro" id="IPR012340">
    <property type="entry name" value="NA-bd_OB-fold"/>
</dbReference>
<dbReference type="InterPro" id="IPR004365">
    <property type="entry name" value="NA-bd_OB_tRNA"/>
</dbReference>
<dbReference type="NCBIfam" id="TIGR00499">
    <property type="entry name" value="lysS_bact"/>
    <property type="match status" value="1"/>
</dbReference>
<dbReference type="NCBIfam" id="NF001756">
    <property type="entry name" value="PRK00484.1"/>
    <property type="match status" value="1"/>
</dbReference>
<dbReference type="PANTHER" id="PTHR42918:SF15">
    <property type="entry name" value="LYSINE--TRNA LIGASE, CHLOROPLASTIC_MITOCHONDRIAL"/>
    <property type="match status" value="1"/>
</dbReference>
<dbReference type="PANTHER" id="PTHR42918">
    <property type="entry name" value="LYSYL-TRNA SYNTHETASE"/>
    <property type="match status" value="1"/>
</dbReference>
<dbReference type="Pfam" id="PF00152">
    <property type="entry name" value="tRNA-synt_2"/>
    <property type="match status" value="1"/>
</dbReference>
<dbReference type="Pfam" id="PF01336">
    <property type="entry name" value="tRNA_anti-codon"/>
    <property type="match status" value="1"/>
</dbReference>
<dbReference type="PRINTS" id="PR00982">
    <property type="entry name" value="TRNASYNTHLYS"/>
</dbReference>
<dbReference type="SUPFAM" id="SSF55681">
    <property type="entry name" value="Class II aaRS and biotin synthetases"/>
    <property type="match status" value="1"/>
</dbReference>
<dbReference type="SUPFAM" id="SSF50249">
    <property type="entry name" value="Nucleic acid-binding proteins"/>
    <property type="match status" value="1"/>
</dbReference>
<dbReference type="PROSITE" id="PS50862">
    <property type="entry name" value="AA_TRNA_LIGASE_II"/>
    <property type="match status" value="1"/>
</dbReference>
<gene>
    <name evidence="1" type="primary">lysS</name>
    <name type="ordered locus">VV1_0526</name>
</gene>
<protein>
    <recommendedName>
        <fullName evidence="1">Lysine--tRNA ligase</fullName>
        <ecNumber evidence="1">6.1.1.6</ecNumber>
    </recommendedName>
    <alternativeName>
        <fullName evidence="1">Lysyl-tRNA synthetase</fullName>
        <shortName evidence="1">LysRS</shortName>
    </alternativeName>
</protein>
<reference key="1">
    <citation type="submission" date="2002-12" db="EMBL/GenBank/DDBJ databases">
        <title>Complete genome sequence of Vibrio vulnificus CMCP6.</title>
        <authorList>
            <person name="Rhee J.H."/>
            <person name="Kim S.Y."/>
            <person name="Chung S.S."/>
            <person name="Kim J.J."/>
            <person name="Moon Y.H."/>
            <person name="Jeong H."/>
            <person name="Choy H.E."/>
        </authorList>
    </citation>
    <scope>NUCLEOTIDE SEQUENCE [LARGE SCALE GENOMIC DNA]</scope>
    <source>
        <strain>CMCP6</strain>
    </source>
</reference>
<evidence type="ECO:0000255" key="1">
    <source>
        <dbReference type="HAMAP-Rule" id="MF_00252"/>
    </source>
</evidence>
<sequence>MTDAVQNETVQEASAQEENKLIAERRAKLDQIRKSCKANGHPNDFRRDSLAGDLQKEFGEKSKEELEALNHVVAIAGRVMAKRGPFLVIQETSGRIQAYADKDVQKVLKDKYQGLDIGDIIGVKGALHKSGKGDLYVNMEEYELLTKALRPLPEKFHGLTDQEMRYRQRYVDLIVNEDSRNAFVVRSKVMSAIRNFMISKQFMEVETPMMHVIPGGASARPFVTHHNALDMPMYLRIAPELYLKRLVVGGFDRVFEINRNFRNEGLSPRHNPEFTMMEFYMAYADYKDLMDLTEELLSSVALEVLGSTSMPYGEHTVEFGGTYTRMSMFEAIKHYNPDHAQIQALTEEDIQNRDLMVSIAKSVHVEVEPFWTCGQLLEEIFGETAEPKLMQPTFITGYPADISPLARRSDDNPFFTDRFEFFIGGREVANGFSELNDAEDQDARFKAQVEAKESGDDEAMFYDADYITALEHGLPPTAGQGIGIDRLVMLLTNTHTIRDVILFPAMRPQA</sequence>
<comment type="catalytic activity">
    <reaction evidence="1">
        <text>tRNA(Lys) + L-lysine + ATP = L-lysyl-tRNA(Lys) + AMP + diphosphate</text>
        <dbReference type="Rhea" id="RHEA:20792"/>
        <dbReference type="Rhea" id="RHEA-COMP:9696"/>
        <dbReference type="Rhea" id="RHEA-COMP:9697"/>
        <dbReference type="ChEBI" id="CHEBI:30616"/>
        <dbReference type="ChEBI" id="CHEBI:32551"/>
        <dbReference type="ChEBI" id="CHEBI:33019"/>
        <dbReference type="ChEBI" id="CHEBI:78442"/>
        <dbReference type="ChEBI" id="CHEBI:78529"/>
        <dbReference type="ChEBI" id="CHEBI:456215"/>
        <dbReference type="EC" id="6.1.1.6"/>
    </reaction>
</comment>
<comment type="cofactor">
    <cofactor evidence="1">
        <name>Mg(2+)</name>
        <dbReference type="ChEBI" id="CHEBI:18420"/>
    </cofactor>
    <text evidence="1">Binds 3 Mg(2+) ions per subunit.</text>
</comment>
<comment type="subunit">
    <text evidence="1">Homodimer.</text>
</comment>
<comment type="subcellular location">
    <subcellularLocation>
        <location evidence="1">Cytoplasm</location>
    </subcellularLocation>
</comment>
<comment type="similarity">
    <text evidence="1">Belongs to the class-II aminoacyl-tRNA synthetase family.</text>
</comment>
<feature type="chain" id="PRO_0000152702" description="Lysine--tRNA ligase">
    <location>
        <begin position="1"/>
        <end position="510"/>
    </location>
</feature>
<feature type="binding site" evidence="1">
    <location>
        <position position="420"/>
    </location>
    <ligand>
        <name>Mg(2+)</name>
        <dbReference type="ChEBI" id="CHEBI:18420"/>
        <label>1</label>
    </ligand>
</feature>
<feature type="binding site" evidence="1">
    <location>
        <position position="427"/>
    </location>
    <ligand>
        <name>Mg(2+)</name>
        <dbReference type="ChEBI" id="CHEBI:18420"/>
        <label>1</label>
    </ligand>
</feature>
<feature type="binding site" evidence="1">
    <location>
        <position position="427"/>
    </location>
    <ligand>
        <name>Mg(2+)</name>
        <dbReference type="ChEBI" id="CHEBI:18420"/>
        <label>2</label>
    </ligand>
</feature>
<organism>
    <name type="scientific">Vibrio vulnificus (strain CMCP6)</name>
    <dbReference type="NCBI Taxonomy" id="216895"/>
    <lineage>
        <taxon>Bacteria</taxon>
        <taxon>Pseudomonadati</taxon>
        <taxon>Pseudomonadota</taxon>
        <taxon>Gammaproteobacteria</taxon>
        <taxon>Vibrionales</taxon>
        <taxon>Vibrionaceae</taxon>
        <taxon>Vibrio</taxon>
    </lineage>
</organism>
<accession>Q8DEQ9</accession>
<keyword id="KW-0030">Aminoacyl-tRNA synthetase</keyword>
<keyword id="KW-0067">ATP-binding</keyword>
<keyword id="KW-0963">Cytoplasm</keyword>
<keyword id="KW-0436">Ligase</keyword>
<keyword id="KW-0460">Magnesium</keyword>
<keyword id="KW-0479">Metal-binding</keyword>
<keyword id="KW-0547">Nucleotide-binding</keyword>
<keyword id="KW-0648">Protein biosynthesis</keyword>
<name>SYK_VIBVU</name>
<proteinExistence type="inferred from homology"/>